<evidence type="ECO:0000250" key="1"/>
<evidence type="ECO:0000250" key="2">
    <source>
        <dbReference type="UniProtKB" id="P16452"/>
    </source>
</evidence>
<evidence type="ECO:0000303" key="3">
    <source>
    </source>
</evidence>
<evidence type="ECO:0000305" key="4"/>
<evidence type="ECO:0000305" key="5">
    <source>
    </source>
</evidence>
<evidence type="ECO:0000312" key="6">
    <source>
        <dbReference type="MGI" id="MGI:95402"/>
    </source>
</evidence>
<evidence type="ECO:0007744" key="7">
    <source>
    </source>
</evidence>
<proteinExistence type="evidence at protein level"/>
<feature type="initiator methionine" description="Removed">
    <location>
        <position position="1"/>
    </location>
</feature>
<feature type="chain" id="PRO_0000213721" description="Protein 4.2">
    <location>
        <begin position="2"/>
        <end position="691"/>
    </location>
</feature>
<feature type="region of interest" description="Band 3 binding" evidence="1">
    <location>
        <begin position="31"/>
        <end position="39"/>
    </location>
</feature>
<feature type="modified residue" description="Phosphoserine" evidence="2">
    <location>
        <position position="248"/>
    </location>
</feature>
<feature type="modified residue" description="Phosphotyrosine" evidence="7">
    <location>
        <position position="570"/>
    </location>
</feature>
<feature type="lipid moiety-binding region" description="N-myristoyl glycine" evidence="1">
    <location>
        <position position="2"/>
    </location>
</feature>
<feature type="sequence conflict" description="In Ref. 2; AAA67917." evidence="4" ref="2">
    <original>Y</original>
    <variation>H</variation>
    <location>
        <position position="22"/>
    </location>
</feature>
<feature type="sequence conflict" description="In Ref. 2; AAA67917." evidence="4" ref="2">
    <original>K</original>
    <variation>N</variation>
    <location>
        <position position="224"/>
    </location>
</feature>
<feature type="sequence conflict" description="In Ref. 2; AAA67917." evidence="4" ref="2">
    <original>C</original>
    <variation>S</variation>
    <location>
        <position position="398"/>
    </location>
</feature>
<feature type="sequence conflict" description="In Ref. 2; AAA67917." evidence="4" ref="2">
    <original>K</original>
    <variation>R</variation>
    <location>
        <position position="450"/>
    </location>
</feature>
<feature type="sequence conflict" description="In Ref. 2; AAA67917." evidence="4" ref="2">
    <original>S</original>
    <variation>R</variation>
    <location>
        <position position="528"/>
    </location>
</feature>
<feature type="sequence conflict" description="In Ref. 1; AAA62275." evidence="4" ref="1">
    <original>C</original>
    <variation>S</variation>
    <location>
        <position position="621"/>
    </location>
</feature>
<keyword id="KW-1003">Cell membrane</keyword>
<keyword id="KW-0133">Cell shape</keyword>
<keyword id="KW-0963">Cytoplasm</keyword>
<keyword id="KW-0206">Cytoskeleton</keyword>
<keyword id="KW-0265">Erythrocyte maturation</keyword>
<keyword id="KW-0449">Lipoprotein</keyword>
<keyword id="KW-0472">Membrane</keyword>
<keyword id="KW-0519">Myristate</keyword>
<keyword id="KW-0597">Phosphoprotein</keyword>
<keyword id="KW-1185">Reference proteome</keyword>
<sequence length="691" mass="76756">MGQALSIKSCDFHAAENNEEHYTKAISSQHLTLRRGQSFTITLNFRAPTHTFLSALKKVALIAQTGEQPSKINKTQAIFPISSLGDQKGWSAAVEERDAQHWTVSVTTPVDAVIGHYSLLLQVSGKKQYPLGQFTLLFNPWNRDDAVFLQNEAERTEYVLNQNGFIYLGTADCIQEEPWDFGQFEKDVMDLSLKLLSMDKQVKDWNQPAHVARVVGALLHALKKKSVLPISQTQAAQEGALLYKRRGSVPILRQWLTGQGRAVYETQAWVSAAVACTVLRCLGIPARVVTTFDSAQGTVGSLLVDEYYNEEGLQNGEGQRGHIWVFQTSVECWMNRPDLSQGYGGWQILHPRAPNGAGVLGSCSLVPVRAVKEGELQLDPAVPELFAAVNASCVVWKCCEDGKLELTNSNRKDVGNCISTKVVGSDRCEDITQNYKYPAGSLQEKEVLEKVQKERLKLGKDNGMCPPSCEPWDPLHMFFEASSSIPLSGDGQLSVTLINPTDEEKKVHLVIGAQALYYNGVLAAGLWSKKQLFMLKPNQVMRLSTNLSFSCFEQTPPENSFLRVTAMARYSHTSLSCFAQENMAIGKPDLIIEMPKRAAQYRPLTVSVRMHNSLEAPMQNCIISIFGRGLIHREKRYGLGSLWPGSSLHTQFQFTPTHLGLQRLTVEVDCDMFQNLTGYRSVLVVAPEVSV</sequence>
<accession>P49222</accession>
<accession>Q3UP33</accession>
<organism>
    <name type="scientific">Mus musculus</name>
    <name type="common">Mouse</name>
    <dbReference type="NCBI Taxonomy" id="10090"/>
    <lineage>
        <taxon>Eukaryota</taxon>
        <taxon>Metazoa</taxon>
        <taxon>Chordata</taxon>
        <taxon>Craniata</taxon>
        <taxon>Vertebrata</taxon>
        <taxon>Euteleostomi</taxon>
        <taxon>Mammalia</taxon>
        <taxon>Eutheria</taxon>
        <taxon>Euarchontoglires</taxon>
        <taxon>Glires</taxon>
        <taxon>Rodentia</taxon>
        <taxon>Myomorpha</taxon>
        <taxon>Muroidea</taxon>
        <taxon>Muridae</taxon>
        <taxon>Murinae</taxon>
        <taxon>Mus</taxon>
        <taxon>Mus</taxon>
    </lineage>
</organism>
<dbReference type="EMBL" id="U03487">
    <property type="protein sequence ID" value="AAA62275.1"/>
    <property type="molecule type" value="mRNA"/>
</dbReference>
<dbReference type="EMBL" id="U04055">
    <property type="protein sequence ID" value="AAA67916.1"/>
    <property type="molecule type" value="mRNA"/>
</dbReference>
<dbReference type="EMBL" id="U04056">
    <property type="protein sequence ID" value="AAA67917.1"/>
    <property type="molecule type" value="Genomic_DNA"/>
</dbReference>
<dbReference type="EMBL" id="L35933">
    <property type="protein sequence ID" value="AAA39875.1"/>
    <property type="molecule type" value="mRNA"/>
</dbReference>
<dbReference type="EMBL" id="AK143841">
    <property type="protein sequence ID" value="BAE25564.1"/>
    <property type="molecule type" value="mRNA"/>
</dbReference>
<dbReference type="EMBL" id="AL844548">
    <property type="status" value="NOT_ANNOTATED_CDS"/>
    <property type="molecule type" value="Genomic_DNA"/>
</dbReference>
<dbReference type="CCDS" id="CCDS16631.1"/>
<dbReference type="PIR" id="A54741">
    <property type="entry name" value="A54741"/>
</dbReference>
<dbReference type="RefSeq" id="NP_038541.1">
    <property type="nucleotide sequence ID" value="NM_013513.3"/>
</dbReference>
<dbReference type="SMR" id="P49222"/>
<dbReference type="BioGRID" id="199463">
    <property type="interactions" value="1"/>
</dbReference>
<dbReference type="FunCoup" id="P49222">
    <property type="interactions" value="24"/>
</dbReference>
<dbReference type="STRING" id="10090.ENSMUSP00000099548"/>
<dbReference type="iPTMnet" id="P49222"/>
<dbReference type="PhosphoSitePlus" id="P49222"/>
<dbReference type="jPOST" id="P49222"/>
<dbReference type="PaxDb" id="10090-ENSMUSP00000099548"/>
<dbReference type="PeptideAtlas" id="P49222"/>
<dbReference type="ProteomicsDB" id="275625"/>
<dbReference type="Antibodypedia" id="11125">
    <property type="antibodies" value="107 antibodies from 19 providers"/>
</dbReference>
<dbReference type="DNASU" id="13828"/>
<dbReference type="Ensembl" id="ENSMUST00000102490.10">
    <property type="protein sequence ID" value="ENSMUSP00000099548.4"/>
    <property type="gene ID" value="ENSMUSG00000023216.14"/>
</dbReference>
<dbReference type="GeneID" id="13828"/>
<dbReference type="KEGG" id="mmu:13828"/>
<dbReference type="UCSC" id="uc008lxi.1">
    <property type="organism name" value="mouse"/>
</dbReference>
<dbReference type="AGR" id="MGI:95402"/>
<dbReference type="CTD" id="2038"/>
<dbReference type="MGI" id="MGI:95402">
    <property type="gene designation" value="Epb42"/>
</dbReference>
<dbReference type="VEuPathDB" id="HostDB:ENSMUSG00000023216"/>
<dbReference type="eggNOG" id="ENOG502R9T9">
    <property type="taxonomic scope" value="Eukaryota"/>
</dbReference>
<dbReference type="GeneTree" id="ENSGT01050000244866"/>
<dbReference type="HOGENOM" id="CLU_013435_3_0_1"/>
<dbReference type="InParanoid" id="P49222"/>
<dbReference type="OMA" id="NPWGRED"/>
<dbReference type="OrthoDB" id="437511at2759"/>
<dbReference type="PhylomeDB" id="P49222"/>
<dbReference type="TreeFam" id="TF324278"/>
<dbReference type="BioGRID-ORCS" id="13828">
    <property type="hits" value="0 hits in 44 CRISPR screens"/>
</dbReference>
<dbReference type="PRO" id="PR:P49222"/>
<dbReference type="Proteomes" id="UP000000589">
    <property type="component" value="Chromosome 2"/>
</dbReference>
<dbReference type="RNAct" id="P49222">
    <property type="molecule type" value="protein"/>
</dbReference>
<dbReference type="Bgee" id="ENSMUSG00000023216">
    <property type="expression patterns" value="Expressed in fetal liver hematopoietic progenitor cell and 80 other cell types or tissues"/>
</dbReference>
<dbReference type="ExpressionAtlas" id="P49222">
    <property type="expression patterns" value="baseline and differential"/>
</dbReference>
<dbReference type="GO" id="GO:0170014">
    <property type="term" value="C:ankyrin-1 complex"/>
    <property type="evidence" value="ECO:0000250"/>
    <property type="project" value="UniProtKB"/>
</dbReference>
<dbReference type="GO" id="GO:0030863">
    <property type="term" value="C:cortical cytoskeleton"/>
    <property type="evidence" value="ECO:0000314"/>
    <property type="project" value="MGI"/>
</dbReference>
<dbReference type="GO" id="GO:0016020">
    <property type="term" value="C:membrane"/>
    <property type="evidence" value="ECO:0000314"/>
    <property type="project" value="MGI"/>
</dbReference>
<dbReference type="GO" id="GO:0005886">
    <property type="term" value="C:plasma membrane"/>
    <property type="evidence" value="ECO:0007669"/>
    <property type="project" value="UniProtKB-SubCell"/>
</dbReference>
<dbReference type="GO" id="GO:0003810">
    <property type="term" value="F:protein-glutamine gamma-glutamyltransferase activity"/>
    <property type="evidence" value="ECO:0007669"/>
    <property type="project" value="InterPro"/>
</dbReference>
<dbReference type="GO" id="GO:0000902">
    <property type="term" value="P:cell morphogenesis"/>
    <property type="evidence" value="ECO:0000315"/>
    <property type="project" value="MGI"/>
</dbReference>
<dbReference type="GO" id="GO:0043249">
    <property type="term" value="P:erythrocyte maturation"/>
    <property type="evidence" value="ECO:0007669"/>
    <property type="project" value="UniProtKB-KW"/>
</dbReference>
<dbReference type="GO" id="GO:0020027">
    <property type="term" value="P:hemoglobin metabolic process"/>
    <property type="evidence" value="ECO:0000315"/>
    <property type="project" value="MGI"/>
</dbReference>
<dbReference type="GO" id="GO:0050801">
    <property type="term" value="P:monoatomic ion homeostasis"/>
    <property type="evidence" value="ECO:0000315"/>
    <property type="project" value="MGI"/>
</dbReference>
<dbReference type="GO" id="GO:0060586">
    <property type="term" value="P:multicellular organismal-level iron ion homeostasis"/>
    <property type="evidence" value="ECO:0000315"/>
    <property type="project" value="MGI"/>
</dbReference>
<dbReference type="GO" id="GO:0008360">
    <property type="term" value="P:regulation of cell shape"/>
    <property type="evidence" value="ECO:0007669"/>
    <property type="project" value="UniProtKB-KW"/>
</dbReference>
<dbReference type="GO" id="GO:0048536">
    <property type="term" value="P:spleen development"/>
    <property type="evidence" value="ECO:0000315"/>
    <property type="project" value="MGI"/>
</dbReference>
<dbReference type="FunFam" id="2.60.40.10:FF:001404">
    <property type="entry name" value="Erythrocyte membrane protein band 4.2"/>
    <property type="match status" value="1"/>
</dbReference>
<dbReference type="FunFam" id="2.60.40.10:FF:001480">
    <property type="entry name" value="Erythrocyte membrane protein band 4.2"/>
    <property type="match status" value="1"/>
</dbReference>
<dbReference type="FunFam" id="3.90.260.10:FF:000002">
    <property type="entry name" value="Erythrocyte membrane protein band 4.2"/>
    <property type="match status" value="1"/>
</dbReference>
<dbReference type="FunFam" id="2.60.40.10:FF:000090">
    <property type="entry name" value="Protein-glutamine gamma-glutamyltransferase 2"/>
    <property type="match status" value="1"/>
</dbReference>
<dbReference type="Gene3D" id="2.60.40.10">
    <property type="entry name" value="Immunoglobulins"/>
    <property type="match status" value="3"/>
</dbReference>
<dbReference type="Gene3D" id="3.90.260.10">
    <property type="entry name" value="Transglutaminase-like"/>
    <property type="match status" value="1"/>
</dbReference>
<dbReference type="InterPro" id="IPR013783">
    <property type="entry name" value="Ig-like_fold"/>
</dbReference>
<dbReference type="InterPro" id="IPR014756">
    <property type="entry name" value="Ig_E-set"/>
</dbReference>
<dbReference type="InterPro" id="IPR038765">
    <property type="entry name" value="Papain-like_cys_pep_sf"/>
</dbReference>
<dbReference type="InterPro" id="IPR050779">
    <property type="entry name" value="Transglutaminase"/>
</dbReference>
<dbReference type="InterPro" id="IPR002931">
    <property type="entry name" value="Transglutaminase-like"/>
</dbReference>
<dbReference type="InterPro" id="IPR036985">
    <property type="entry name" value="Transglutaminase-like_sf"/>
</dbReference>
<dbReference type="InterPro" id="IPR023608">
    <property type="entry name" value="Transglutaminase_animal"/>
</dbReference>
<dbReference type="InterPro" id="IPR013808">
    <property type="entry name" value="Transglutaminase_AS"/>
</dbReference>
<dbReference type="InterPro" id="IPR008958">
    <property type="entry name" value="Transglutaminase_C"/>
</dbReference>
<dbReference type="InterPro" id="IPR036238">
    <property type="entry name" value="Transglutaminase_C_sf"/>
</dbReference>
<dbReference type="InterPro" id="IPR001102">
    <property type="entry name" value="Transglutaminase_N"/>
</dbReference>
<dbReference type="PANTHER" id="PTHR11590:SF44">
    <property type="entry name" value="PROTEIN 4.2"/>
    <property type="match status" value="1"/>
</dbReference>
<dbReference type="PANTHER" id="PTHR11590">
    <property type="entry name" value="PROTEIN-GLUTAMINE GAMMA-GLUTAMYLTRANSFERASE"/>
    <property type="match status" value="1"/>
</dbReference>
<dbReference type="Pfam" id="PF00927">
    <property type="entry name" value="Transglut_C"/>
    <property type="match status" value="2"/>
</dbReference>
<dbReference type="Pfam" id="PF01841">
    <property type="entry name" value="Transglut_core"/>
    <property type="match status" value="1"/>
</dbReference>
<dbReference type="Pfam" id="PF00868">
    <property type="entry name" value="Transglut_N"/>
    <property type="match status" value="1"/>
</dbReference>
<dbReference type="PIRSF" id="PIRSF000459">
    <property type="entry name" value="TGM_EBP42"/>
    <property type="match status" value="1"/>
</dbReference>
<dbReference type="SMART" id="SM00460">
    <property type="entry name" value="TGc"/>
    <property type="match status" value="1"/>
</dbReference>
<dbReference type="SUPFAM" id="SSF54001">
    <property type="entry name" value="Cysteine proteinases"/>
    <property type="match status" value="1"/>
</dbReference>
<dbReference type="SUPFAM" id="SSF81296">
    <property type="entry name" value="E set domains"/>
    <property type="match status" value="1"/>
</dbReference>
<dbReference type="SUPFAM" id="SSF49309">
    <property type="entry name" value="Transglutaminase, two C-terminal domains"/>
    <property type="match status" value="2"/>
</dbReference>
<dbReference type="PROSITE" id="PS00547">
    <property type="entry name" value="TRANSGLUTAMINASES"/>
    <property type="match status" value="1"/>
</dbReference>
<protein>
    <recommendedName>
        <fullName evidence="4">Protein 4.2</fullName>
        <shortName evidence="4">P4.2</shortName>
    </recommendedName>
    <alternativeName>
        <fullName evidence="6">Erythrocyte membrane protein band 4.2</fullName>
        <shortName evidence="3">Erythrocyte protein 4.2</shortName>
    </alternativeName>
</protein>
<name>EPB42_MOUSE</name>
<comment type="function">
    <text evidence="2">Component of the ankyrin-1 complex, a multiprotein complex involved in the stability and shape of the erythrocyte membrane.</text>
</comment>
<comment type="subunit">
    <text evidence="2">Component of the ankyrin-1 complex in the erythrocyte, composed of ANK1, RHCE, RHAG, SLC4A1, EPB42, GYPA, GYPB and AQP1. Interacts with SLC4A1 (via the cytoplasmic domain); this interaction is mediated by the SLC4A1 Band 3-I dimer. Interacts with ANK1 (via ANK 1-13 repeats). Interacts with AQP1 (via the C-terminal).</text>
</comment>
<comment type="subcellular location">
    <subcellularLocation>
        <location>Cell membrane</location>
        <topology>Lipid-anchor</topology>
        <orientation>Cytoplasmic side</orientation>
    </subcellularLocation>
    <subcellularLocation>
        <location>Cytoplasm</location>
        <location>Cytoskeleton</location>
    </subcellularLocation>
    <text>Cytoplasmic surface of erythrocyte membranes.</text>
</comment>
<comment type="miscellaneous">
    <text>The substitution of an Ala for a Cys in the active site may be responsible for the lack of transglutaminase activity of band 4.2.</text>
</comment>
<comment type="similarity">
    <text evidence="4">Belongs to the transglutaminase superfamily. Transglutaminase family.</text>
</comment>
<comment type="caution">
    <text evidence="5">Was originally thought to be pallidin.</text>
</comment>
<gene>
    <name evidence="6" type="primary">Epb42</name>
    <name evidence="6" type="synonym">Epb4.2</name>
</gene>
<reference key="1">
    <citation type="journal article" date="1994" name="Mamm. Genome">
        <title>Molecular cloning of mouse erythrocyte protein 4.2: a membrane protein with strong homology with the transglutaminase supergene family.</title>
        <authorList>
            <person name="Rybicki A.C."/>
            <person name="Schwartz R.S."/>
            <person name="Qiu J.J.-H."/>
            <person name="Gilman J.G."/>
        </authorList>
    </citation>
    <scope>NUCLEOTIDE SEQUENCE [MRNA]</scope>
    <source>
        <strain>C57BL/6J</strain>
        <tissue>Reticulocyte</tissue>
    </source>
</reference>
<reference key="2">
    <citation type="journal article" date="1994" name="Genomics">
        <title>cDNA sequence, gene sequence, and properties of murine pallidin (band 4.2), the protein implicated in the murine pallid mutation.</title>
        <authorList>
            <person name="Korsgren C."/>
            <person name="Cohen C.M."/>
        </authorList>
    </citation>
    <scope>NUCLEOTIDE SEQUENCE [GENOMIC DNA / MRNA]</scope>
    <source>
        <strain>BALB/cJ</strain>
        <strain>C57BL/6J</strain>
        <tissue>Liver</tissue>
        <tissue>Reticulocyte</tissue>
    </source>
</reference>
<reference key="3">
    <citation type="submission" date="1994-09" db="EMBL/GenBank/DDBJ databases">
        <title>Murine erythrocyte protein 4.2 gene: similarity and differences in structure and expression from its human counterpart.</title>
        <authorList>
            <person name="Karacay B.B.K."/>
            <person name="Enzhong X.E.X."/>
            <person name="Chang L.-S.L.S."/>
        </authorList>
    </citation>
    <scope>NUCLEOTIDE SEQUENCE [MRNA]</scope>
    <source>
        <tissue>Blood</tissue>
    </source>
</reference>
<reference key="4">
    <citation type="journal article" date="2005" name="Science">
        <title>The transcriptional landscape of the mammalian genome.</title>
        <authorList>
            <person name="Carninci P."/>
            <person name="Kasukawa T."/>
            <person name="Katayama S."/>
            <person name="Gough J."/>
            <person name="Frith M.C."/>
            <person name="Maeda N."/>
            <person name="Oyama R."/>
            <person name="Ravasi T."/>
            <person name="Lenhard B."/>
            <person name="Wells C."/>
            <person name="Kodzius R."/>
            <person name="Shimokawa K."/>
            <person name="Bajic V.B."/>
            <person name="Brenner S.E."/>
            <person name="Batalov S."/>
            <person name="Forrest A.R."/>
            <person name="Zavolan M."/>
            <person name="Davis M.J."/>
            <person name="Wilming L.G."/>
            <person name="Aidinis V."/>
            <person name="Allen J.E."/>
            <person name="Ambesi-Impiombato A."/>
            <person name="Apweiler R."/>
            <person name="Aturaliya R.N."/>
            <person name="Bailey T.L."/>
            <person name="Bansal M."/>
            <person name="Baxter L."/>
            <person name="Beisel K.W."/>
            <person name="Bersano T."/>
            <person name="Bono H."/>
            <person name="Chalk A.M."/>
            <person name="Chiu K.P."/>
            <person name="Choudhary V."/>
            <person name="Christoffels A."/>
            <person name="Clutterbuck D.R."/>
            <person name="Crowe M.L."/>
            <person name="Dalla E."/>
            <person name="Dalrymple B.P."/>
            <person name="de Bono B."/>
            <person name="Della Gatta G."/>
            <person name="di Bernardo D."/>
            <person name="Down T."/>
            <person name="Engstrom P."/>
            <person name="Fagiolini M."/>
            <person name="Faulkner G."/>
            <person name="Fletcher C.F."/>
            <person name="Fukushima T."/>
            <person name="Furuno M."/>
            <person name="Futaki S."/>
            <person name="Gariboldi M."/>
            <person name="Georgii-Hemming P."/>
            <person name="Gingeras T.R."/>
            <person name="Gojobori T."/>
            <person name="Green R.E."/>
            <person name="Gustincich S."/>
            <person name="Harbers M."/>
            <person name="Hayashi Y."/>
            <person name="Hensch T.K."/>
            <person name="Hirokawa N."/>
            <person name="Hill D."/>
            <person name="Huminiecki L."/>
            <person name="Iacono M."/>
            <person name="Ikeo K."/>
            <person name="Iwama A."/>
            <person name="Ishikawa T."/>
            <person name="Jakt M."/>
            <person name="Kanapin A."/>
            <person name="Katoh M."/>
            <person name="Kawasawa Y."/>
            <person name="Kelso J."/>
            <person name="Kitamura H."/>
            <person name="Kitano H."/>
            <person name="Kollias G."/>
            <person name="Krishnan S.P."/>
            <person name="Kruger A."/>
            <person name="Kummerfeld S.K."/>
            <person name="Kurochkin I.V."/>
            <person name="Lareau L.F."/>
            <person name="Lazarevic D."/>
            <person name="Lipovich L."/>
            <person name="Liu J."/>
            <person name="Liuni S."/>
            <person name="McWilliam S."/>
            <person name="Madan Babu M."/>
            <person name="Madera M."/>
            <person name="Marchionni L."/>
            <person name="Matsuda H."/>
            <person name="Matsuzawa S."/>
            <person name="Miki H."/>
            <person name="Mignone F."/>
            <person name="Miyake S."/>
            <person name="Morris K."/>
            <person name="Mottagui-Tabar S."/>
            <person name="Mulder N."/>
            <person name="Nakano N."/>
            <person name="Nakauchi H."/>
            <person name="Ng P."/>
            <person name="Nilsson R."/>
            <person name="Nishiguchi S."/>
            <person name="Nishikawa S."/>
            <person name="Nori F."/>
            <person name="Ohara O."/>
            <person name="Okazaki Y."/>
            <person name="Orlando V."/>
            <person name="Pang K.C."/>
            <person name="Pavan W.J."/>
            <person name="Pavesi G."/>
            <person name="Pesole G."/>
            <person name="Petrovsky N."/>
            <person name="Piazza S."/>
            <person name="Reed J."/>
            <person name="Reid J.F."/>
            <person name="Ring B.Z."/>
            <person name="Ringwald M."/>
            <person name="Rost B."/>
            <person name="Ruan Y."/>
            <person name="Salzberg S.L."/>
            <person name="Sandelin A."/>
            <person name="Schneider C."/>
            <person name="Schoenbach C."/>
            <person name="Sekiguchi K."/>
            <person name="Semple C.A."/>
            <person name="Seno S."/>
            <person name="Sessa L."/>
            <person name="Sheng Y."/>
            <person name="Shibata Y."/>
            <person name="Shimada H."/>
            <person name="Shimada K."/>
            <person name="Silva D."/>
            <person name="Sinclair B."/>
            <person name="Sperling S."/>
            <person name="Stupka E."/>
            <person name="Sugiura K."/>
            <person name="Sultana R."/>
            <person name="Takenaka Y."/>
            <person name="Taki K."/>
            <person name="Tammoja K."/>
            <person name="Tan S.L."/>
            <person name="Tang S."/>
            <person name="Taylor M.S."/>
            <person name="Tegner J."/>
            <person name="Teichmann S.A."/>
            <person name="Ueda H.R."/>
            <person name="van Nimwegen E."/>
            <person name="Verardo R."/>
            <person name="Wei C.L."/>
            <person name="Yagi K."/>
            <person name="Yamanishi H."/>
            <person name="Zabarovsky E."/>
            <person name="Zhu S."/>
            <person name="Zimmer A."/>
            <person name="Hide W."/>
            <person name="Bult C."/>
            <person name="Grimmond S.M."/>
            <person name="Teasdale R.D."/>
            <person name="Liu E.T."/>
            <person name="Brusic V."/>
            <person name="Quackenbush J."/>
            <person name="Wahlestedt C."/>
            <person name="Mattick J.S."/>
            <person name="Hume D.A."/>
            <person name="Kai C."/>
            <person name="Sasaki D."/>
            <person name="Tomaru Y."/>
            <person name="Fukuda S."/>
            <person name="Kanamori-Katayama M."/>
            <person name="Suzuki M."/>
            <person name="Aoki J."/>
            <person name="Arakawa T."/>
            <person name="Iida J."/>
            <person name="Imamura K."/>
            <person name="Itoh M."/>
            <person name="Kato T."/>
            <person name="Kawaji H."/>
            <person name="Kawagashira N."/>
            <person name="Kawashima T."/>
            <person name="Kojima M."/>
            <person name="Kondo S."/>
            <person name="Konno H."/>
            <person name="Nakano K."/>
            <person name="Ninomiya N."/>
            <person name="Nishio T."/>
            <person name="Okada M."/>
            <person name="Plessy C."/>
            <person name="Shibata K."/>
            <person name="Shiraki T."/>
            <person name="Suzuki S."/>
            <person name="Tagami M."/>
            <person name="Waki K."/>
            <person name="Watahiki A."/>
            <person name="Okamura-Oho Y."/>
            <person name="Suzuki H."/>
            <person name="Kawai J."/>
            <person name="Hayashizaki Y."/>
        </authorList>
    </citation>
    <scope>NUCLEOTIDE SEQUENCE [LARGE SCALE MRNA]</scope>
    <source>
        <strain>C57BL/6J</strain>
        <tissue>Spleen</tissue>
    </source>
</reference>
<reference key="5">
    <citation type="journal article" date="2009" name="PLoS Biol.">
        <title>Lineage-specific biology revealed by a finished genome assembly of the mouse.</title>
        <authorList>
            <person name="Church D.M."/>
            <person name="Goodstadt L."/>
            <person name="Hillier L.W."/>
            <person name="Zody M.C."/>
            <person name="Goldstein S."/>
            <person name="She X."/>
            <person name="Bult C.J."/>
            <person name="Agarwala R."/>
            <person name="Cherry J.L."/>
            <person name="DiCuccio M."/>
            <person name="Hlavina W."/>
            <person name="Kapustin Y."/>
            <person name="Meric P."/>
            <person name="Maglott D."/>
            <person name="Birtle Z."/>
            <person name="Marques A.C."/>
            <person name="Graves T."/>
            <person name="Zhou S."/>
            <person name="Teague B."/>
            <person name="Potamousis K."/>
            <person name="Churas C."/>
            <person name="Place M."/>
            <person name="Herschleb J."/>
            <person name="Runnheim R."/>
            <person name="Forrest D."/>
            <person name="Amos-Landgraf J."/>
            <person name="Schwartz D.C."/>
            <person name="Cheng Z."/>
            <person name="Lindblad-Toh K."/>
            <person name="Eichler E.E."/>
            <person name="Ponting C.P."/>
        </authorList>
    </citation>
    <scope>NUCLEOTIDE SEQUENCE [LARGE SCALE GENOMIC DNA]</scope>
    <source>
        <strain>C57BL/6J</strain>
    </source>
</reference>
<reference key="6">
    <citation type="journal article" date="2010" name="Cell">
        <title>A tissue-specific atlas of mouse protein phosphorylation and expression.</title>
        <authorList>
            <person name="Huttlin E.L."/>
            <person name="Jedrychowski M.P."/>
            <person name="Elias J.E."/>
            <person name="Goswami T."/>
            <person name="Rad R."/>
            <person name="Beausoleil S.A."/>
            <person name="Villen J."/>
            <person name="Haas W."/>
            <person name="Sowa M.E."/>
            <person name="Gygi S.P."/>
        </authorList>
    </citation>
    <scope>PHOSPHORYLATION [LARGE SCALE ANALYSIS] AT TYR-570</scope>
    <scope>IDENTIFICATION BY MASS SPECTROMETRY [LARGE SCALE ANALYSIS]</scope>
    <source>
        <tissue>Brown adipose tissue</tissue>
        <tissue>Heart</tissue>
        <tissue>Kidney</tissue>
        <tissue>Liver</tissue>
        <tissue>Lung</tissue>
        <tissue>Spleen</tissue>
    </source>
</reference>